<evidence type="ECO:0000255" key="1"/>
<evidence type="ECO:0000269" key="2">
    <source>
    </source>
</evidence>
<evidence type="ECO:0000269" key="3">
    <source>
    </source>
</evidence>
<evidence type="ECO:0000305" key="4"/>
<evidence type="ECO:0000312" key="5">
    <source>
        <dbReference type="EMBL" id="AAH54059.1"/>
    </source>
</evidence>
<evidence type="ECO:0000312" key="6">
    <source>
        <dbReference type="EMBL" id="AAM12949.1"/>
    </source>
</evidence>
<evidence type="ECO:0000312" key="7">
    <source>
        <dbReference type="EMBL" id="ABB18023.1"/>
    </source>
</evidence>
<evidence type="ECO:0000312" key="8">
    <source>
        <dbReference type="EMBL" id="BAE20719.1"/>
    </source>
</evidence>
<evidence type="ECO:0007744" key="9">
    <source>
    </source>
</evidence>
<sequence length="80" mass="9362">MKYPLVPLVSDLTLSFLVFWLCLPVALLLFLTIVWLHFLLSQESKEDDSDLCFNWEPWSKRPSECGCEETFPGEEDGLHW</sequence>
<name>ADIG_MOUSE</name>
<feature type="chain" id="PRO_0000296376" description="Adipogenin">
    <location>
        <begin position="1"/>
        <end position="80"/>
    </location>
</feature>
<feature type="transmembrane region" description="Helical" evidence="1">
    <location>
        <begin position="16"/>
        <end position="36"/>
    </location>
</feature>
<feature type="modified residue" description="Phosphoserine" evidence="9">
    <location>
        <position position="63"/>
    </location>
</feature>
<protein>
    <recommendedName>
        <fullName>Adipogenin</fullName>
    </recommendedName>
    <alternativeName>
        <fullName>Small adipocyte factor 1</fullName>
        <shortName>SMAF-1</shortName>
    </alternativeName>
</protein>
<gene>
    <name type="primary">Adig</name>
    <name type="synonym">Smaf1</name>
</gene>
<proteinExistence type="evidence at protein level"/>
<comment type="function">
    <text evidence="3">Plays a role in stimulating adipocyte differentiation and development.</text>
</comment>
<comment type="subcellular location">
    <subcellularLocation>
        <location evidence="1">Membrane</location>
        <topology evidence="1">Single-pass membrane protein</topology>
    </subcellularLocation>
    <subcellularLocation>
        <location evidence="2 3">Nucleus</location>
    </subcellularLocation>
</comment>
<comment type="tissue specificity">
    <text evidence="2 3">Selectively expressed in adipose tissue where it is particularly enriched in brown adipose tissue. In adipose tissue, expressed exclusively in adipocytes and not in the stromal-vascular cell population. Expressed at much lower levels in heart, stomach and muscle and barely detected in kidney and lung.</text>
</comment>
<comment type="induction">
    <text evidence="2 3">Induced during adipose conversion of 3T3-L1 cells. Up-regulated in 3T3-L1 adipocytes by troglitazone which stimulates PPARG expression during differentiation. Down-regulated in 3T3-L1 adipocytes exposed to TNF-alpha and to retinoic acid.</text>
</comment>
<comment type="similarity">
    <text evidence="4">Belongs to the adipogenin family.</text>
</comment>
<organism>
    <name type="scientific">Mus musculus</name>
    <name type="common">Mouse</name>
    <dbReference type="NCBI Taxonomy" id="10090"/>
    <lineage>
        <taxon>Eukaryota</taxon>
        <taxon>Metazoa</taxon>
        <taxon>Chordata</taxon>
        <taxon>Craniata</taxon>
        <taxon>Vertebrata</taxon>
        <taxon>Euteleostomi</taxon>
        <taxon>Mammalia</taxon>
        <taxon>Eutheria</taxon>
        <taxon>Euarchontoglires</taxon>
        <taxon>Glires</taxon>
        <taxon>Rodentia</taxon>
        <taxon>Myomorpha</taxon>
        <taxon>Muroidea</taxon>
        <taxon>Muridae</taxon>
        <taxon>Murinae</taxon>
        <taxon>Mus</taxon>
        <taxon>Mus</taxon>
    </lineage>
</organism>
<keyword id="KW-0472">Membrane</keyword>
<keyword id="KW-0539">Nucleus</keyword>
<keyword id="KW-0597">Phosphoprotein</keyword>
<keyword id="KW-1185">Reference proteome</keyword>
<keyword id="KW-0812">Transmembrane</keyword>
<keyword id="KW-1133">Transmembrane helix</keyword>
<accession>Q8R400</accession>
<reference evidence="4 6" key="1">
    <citation type="journal article" date="2005" name="Biochem. Biophys. Res. Commun.">
        <title>Cloning, expression, and differentiation-dependent regulation of SMAF1 in adipogenesis.</title>
        <authorList>
            <person name="Kim J.Y."/>
            <person name="Tillison K."/>
            <person name="Smas C.M."/>
        </authorList>
    </citation>
    <scope>NUCLEOTIDE SEQUENCE [MRNA]</scope>
    <scope>SUBCELLULAR LOCATION</scope>
    <scope>TISSUE SPECIFICITY</scope>
    <scope>INDUCTION</scope>
    <source>
        <strain evidence="6">C57BL/6J</strain>
    </source>
</reference>
<reference evidence="4 7" key="2">
    <citation type="journal article" date="2005" name="Mol. Cell. Biochem.">
        <title>Up-regulation of adipogenin, an adipocyte plasma transmembrane protein, during adipogenesis.</title>
        <authorList>
            <person name="Hong Y.-H."/>
            <person name="Hishikawa D."/>
            <person name="Miyahara H."/>
            <person name="Tsuzuki H."/>
            <person name="Nishimura Y."/>
            <person name="Gotoh C."/>
            <person name="Choi K.-C."/>
            <person name="Hokari Y."/>
            <person name="Takagi Y."/>
            <person name="Lee H.-G."/>
            <person name="Cho K.-K."/>
            <person name="Roh S.-G."/>
            <person name="Sasaki S."/>
        </authorList>
    </citation>
    <scope>NUCLEOTIDE SEQUENCE [MRNA]</scope>
    <scope>FUNCTION</scope>
    <scope>SUBCELLULAR LOCATION</scope>
    <scope>TISSUE SPECIFICITY</scope>
    <scope>INDUCTION</scope>
    <source>
        <strain evidence="7">C57BL/6J</strain>
    </source>
</reference>
<reference evidence="8" key="3">
    <citation type="journal article" date="2005" name="Science">
        <title>The transcriptional landscape of the mammalian genome.</title>
        <authorList>
            <person name="Carninci P."/>
            <person name="Kasukawa T."/>
            <person name="Katayama S."/>
            <person name="Gough J."/>
            <person name="Frith M.C."/>
            <person name="Maeda N."/>
            <person name="Oyama R."/>
            <person name="Ravasi T."/>
            <person name="Lenhard B."/>
            <person name="Wells C."/>
            <person name="Kodzius R."/>
            <person name="Shimokawa K."/>
            <person name="Bajic V.B."/>
            <person name="Brenner S.E."/>
            <person name="Batalov S."/>
            <person name="Forrest A.R."/>
            <person name="Zavolan M."/>
            <person name="Davis M.J."/>
            <person name="Wilming L.G."/>
            <person name="Aidinis V."/>
            <person name="Allen J.E."/>
            <person name="Ambesi-Impiombato A."/>
            <person name="Apweiler R."/>
            <person name="Aturaliya R.N."/>
            <person name="Bailey T.L."/>
            <person name="Bansal M."/>
            <person name="Baxter L."/>
            <person name="Beisel K.W."/>
            <person name="Bersano T."/>
            <person name="Bono H."/>
            <person name="Chalk A.M."/>
            <person name="Chiu K.P."/>
            <person name="Choudhary V."/>
            <person name="Christoffels A."/>
            <person name="Clutterbuck D.R."/>
            <person name="Crowe M.L."/>
            <person name="Dalla E."/>
            <person name="Dalrymple B.P."/>
            <person name="de Bono B."/>
            <person name="Della Gatta G."/>
            <person name="di Bernardo D."/>
            <person name="Down T."/>
            <person name="Engstrom P."/>
            <person name="Fagiolini M."/>
            <person name="Faulkner G."/>
            <person name="Fletcher C.F."/>
            <person name="Fukushima T."/>
            <person name="Furuno M."/>
            <person name="Futaki S."/>
            <person name="Gariboldi M."/>
            <person name="Georgii-Hemming P."/>
            <person name="Gingeras T.R."/>
            <person name="Gojobori T."/>
            <person name="Green R.E."/>
            <person name="Gustincich S."/>
            <person name="Harbers M."/>
            <person name="Hayashi Y."/>
            <person name="Hensch T.K."/>
            <person name="Hirokawa N."/>
            <person name="Hill D."/>
            <person name="Huminiecki L."/>
            <person name="Iacono M."/>
            <person name="Ikeo K."/>
            <person name="Iwama A."/>
            <person name="Ishikawa T."/>
            <person name="Jakt M."/>
            <person name="Kanapin A."/>
            <person name="Katoh M."/>
            <person name="Kawasawa Y."/>
            <person name="Kelso J."/>
            <person name="Kitamura H."/>
            <person name="Kitano H."/>
            <person name="Kollias G."/>
            <person name="Krishnan S.P."/>
            <person name="Kruger A."/>
            <person name="Kummerfeld S.K."/>
            <person name="Kurochkin I.V."/>
            <person name="Lareau L.F."/>
            <person name="Lazarevic D."/>
            <person name="Lipovich L."/>
            <person name="Liu J."/>
            <person name="Liuni S."/>
            <person name="McWilliam S."/>
            <person name="Madan Babu M."/>
            <person name="Madera M."/>
            <person name="Marchionni L."/>
            <person name="Matsuda H."/>
            <person name="Matsuzawa S."/>
            <person name="Miki H."/>
            <person name="Mignone F."/>
            <person name="Miyake S."/>
            <person name="Morris K."/>
            <person name="Mottagui-Tabar S."/>
            <person name="Mulder N."/>
            <person name="Nakano N."/>
            <person name="Nakauchi H."/>
            <person name="Ng P."/>
            <person name="Nilsson R."/>
            <person name="Nishiguchi S."/>
            <person name="Nishikawa S."/>
            <person name="Nori F."/>
            <person name="Ohara O."/>
            <person name="Okazaki Y."/>
            <person name="Orlando V."/>
            <person name="Pang K.C."/>
            <person name="Pavan W.J."/>
            <person name="Pavesi G."/>
            <person name="Pesole G."/>
            <person name="Petrovsky N."/>
            <person name="Piazza S."/>
            <person name="Reed J."/>
            <person name="Reid J.F."/>
            <person name="Ring B.Z."/>
            <person name="Ringwald M."/>
            <person name="Rost B."/>
            <person name="Ruan Y."/>
            <person name="Salzberg S.L."/>
            <person name="Sandelin A."/>
            <person name="Schneider C."/>
            <person name="Schoenbach C."/>
            <person name="Sekiguchi K."/>
            <person name="Semple C.A."/>
            <person name="Seno S."/>
            <person name="Sessa L."/>
            <person name="Sheng Y."/>
            <person name="Shibata Y."/>
            <person name="Shimada H."/>
            <person name="Shimada K."/>
            <person name="Silva D."/>
            <person name="Sinclair B."/>
            <person name="Sperling S."/>
            <person name="Stupka E."/>
            <person name="Sugiura K."/>
            <person name="Sultana R."/>
            <person name="Takenaka Y."/>
            <person name="Taki K."/>
            <person name="Tammoja K."/>
            <person name="Tan S.L."/>
            <person name="Tang S."/>
            <person name="Taylor M.S."/>
            <person name="Tegner J."/>
            <person name="Teichmann S.A."/>
            <person name="Ueda H.R."/>
            <person name="van Nimwegen E."/>
            <person name="Verardo R."/>
            <person name="Wei C.L."/>
            <person name="Yagi K."/>
            <person name="Yamanishi H."/>
            <person name="Zabarovsky E."/>
            <person name="Zhu S."/>
            <person name="Zimmer A."/>
            <person name="Hide W."/>
            <person name="Bult C."/>
            <person name="Grimmond S.M."/>
            <person name="Teasdale R.D."/>
            <person name="Liu E.T."/>
            <person name="Brusic V."/>
            <person name="Quackenbush J."/>
            <person name="Wahlestedt C."/>
            <person name="Mattick J.S."/>
            <person name="Hume D.A."/>
            <person name="Kai C."/>
            <person name="Sasaki D."/>
            <person name="Tomaru Y."/>
            <person name="Fukuda S."/>
            <person name="Kanamori-Katayama M."/>
            <person name="Suzuki M."/>
            <person name="Aoki J."/>
            <person name="Arakawa T."/>
            <person name="Iida J."/>
            <person name="Imamura K."/>
            <person name="Itoh M."/>
            <person name="Kato T."/>
            <person name="Kawaji H."/>
            <person name="Kawagashira N."/>
            <person name="Kawashima T."/>
            <person name="Kojima M."/>
            <person name="Kondo S."/>
            <person name="Konno H."/>
            <person name="Nakano K."/>
            <person name="Ninomiya N."/>
            <person name="Nishio T."/>
            <person name="Okada M."/>
            <person name="Plessy C."/>
            <person name="Shibata K."/>
            <person name="Shiraki T."/>
            <person name="Suzuki S."/>
            <person name="Tagami M."/>
            <person name="Waki K."/>
            <person name="Watahiki A."/>
            <person name="Okamura-Oho Y."/>
            <person name="Suzuki H."/>
            <person name="Kawai J."/>
            <person name="Hayashizaki Y."/>
        </authorList>
    </citation>
    <scope>NUCLEOTIDE SEQUENCE [LARGE SCALE MRNA]</scope>
    <source>
        <strain evidence="8">C57BL/6J</strain>
        <tissue evidence="8">Embryo</tissue>
    </source>
</reference>
<reference key="4">
    <citation type="journal article" date="2009" name="PLoS Biol.">
        <title>Lineage-specific biology revealed by a finished genome assembly of the mouse.</title>
        <authorList>
            <person name="Church D.M."/>
            <person name="Goodstadt L."/>
            <person name="Hillier L.W."/>
            <person name="Zody M.C."/>
            <person name="Goldstein S."/>
            <person name="She X."/>
            <person name="Bult C.J."/>
            <person name="Agarwala R."/>
            <person name="Cherry J.L."/>
            <person name="DiCuccio M."/>
            <person name="Hlavina W."/>
            <person name="Kapustin Y."/>
            <person name="Meric P."/>
            <person name="Maglott D."/>
            <person name="Birtle Z."/>
            <person name="Marques A.C."/>
            <person name="Graves T."/>
            <person name="Zhou S."/>
            <person name="Teague B."/>
            <person name="Potamousis K."/>
            <person name="Churas C."/>
            <person name="Place M."/>
            <person name="Herschleb J."/>
            <person name="Runnheim R."/>
            <person name="Forrest D."/>
            <person name="Amos-Landgraf J."/>
            <person name="Schwartz D.C."/>
            <person name="Cheng Z."/>
            <person name="Lindblad-Toh K."/>
            <person name="Eichler E.E."/>
            <person name="Ponting C.P."/>
        </authorList>
    </citation>
    <scope>NUCLEOTIDE SEQUENCE [LARGE SCALE GENOMIC DNA]</scope>
    <source>
        <strain>C57BL/6J</strain>
    </source>
</reference>
<reference evidence="5" key="5">
    <citation type="journal article" date="2004" name="Genome Res.">
        <title>The status, quality, and expansion of the NIH full-length cDNA project: the Mammalian Gene Collection (MGC).</title>
        <authorList>
            <consortium name="The MGC Project Team"/>
        </authorList>
    </citation>
    <scope>NUCLEOTIDE SEQUENCE [LARGE SCALE MRNA]</scope>
    <source>
        <tissue evidence="5">Mammary gland</tissue>
    </source>
</reference>
<reference key="6">
    <citation type="journal article" date="2010" name="Cell">
        <title>A tissue-specific atlas of mouse protein phosphorylation and expression.</title>
        <authorList>
            <person name="Huttlin E.L."/>
            <person name="Jedrychowski M.P."/>
            <person name="Elias J.E."/>
            <person name="Goswami T."/>
            <person name="Rad R."/>
            <person name="Beausoleil S.A."/>
            <person name="Villen J."/>
            <person name="Haas W."/>
            <person name="Sowa M.E."/>
            <person name="Gygi S.P."/>
        </authorList>
    </citation>
    <scope>PHOSPHORYLATION [LARGE SCALE ANALYSIS] AT SER-63</scope>
    <scope>IDENTIFICATION BY MASS SPECTROMETRY [LARGE SCALE ANALYSIS]</scope>
    <source>
        <tissue>Brown adipose tissue</tissue>
        <tissue>Kidney</tissue>
    </source>
</reference>
<dbReference type="EMBL" id="AY092026">
    <property type="protein sequence ID" value="AAM12949.1"/>
    <property type="molecule type" value="mRNA"/>
</dbReference>
<dbReference type="EMBL" id="DQ223719">
    <property type="protein sequence ID" value="ABB18023.1"/>
    <property type="molecule type" value="mRNA"/>
</dbReference>
<dbReference type="EMBL" id="AK131610">
    <property type="protein sequence ID" value="BAE20719.1"/>
    <property type="molecule type" value="mRNA"/>
</dbReference>
<dbReference type="EMBL" id="AL663091">
    <property type="status" value="NOT_ANNOTATED_CDS"/>
    <property type="molecule type" value="Genomic_DNA"/>
</dbReference>
<dbReference type="EMBL" id="BC054059">
    <property type="protein sequence ID" value="AAH54059.1"/>
    <property type="molecule type" value="mRNA"/>
</dbReference>
<dbReference type="CCDS" id="CCDS16990.1"/>
<dbReference type="RefSeq" id="NP_663610.1">
    <property type="nucleotide sequence ID" value="NM_145635.2"/>
</dbReference>
<dbReference type="SMR" id="Q8R400"/>
<dbReference type="FunCoup" id="Q8R400">
    <property type="interactions" value="135"/>
</dbReference>
<dbReference type="STRING" id="10090.ENSMUSP00000051732"/>
<dbReference type="iPTMnet" id="Q8R400"/>
<dbReference type="PhosphoSitePlus" id="Q8R400"/>
<dbReference type="SwissPalm" id="Q8R400"/>
<dbReference type="jPOST" id="Q8R400"/>
<dbReference type="PaxDb" id="10090-ENSMUSP00000051732"/>
<dbReference type="ProteomicsDB" id="296184"/>
<dbReference type="Antibodypedia" id="51583">
    <property type="antibodies" value="12 antibodies from 8 providers"/>
</dbReference>
<dbReference type="DNASU" id="246747"/>
<dbReference type="Ensembl" id="ENSMUST00000059889.4">
    <property type="protein sequence ID" value="ENSMUSP00000051732.4"/>
    <property type="gene ID" value="ENSMUSG00000044405.5"/>
</dbReference>
<dbReference type="GeneID" id="246747"/>
<dbReference type="KEGG" id="mmu:246747"/>
<dbReference type="UCSC" id="uc008nqi.1">
    <property type="organism name" value="mouse"/>
</dbReference>
<dbReference type="AGR" id="MGI:2675492"/>
<dbReference type="CTD" id="149685"/>
<dbReference type="MGI" id="MGI:2675492">
    <property type="gene designation" value="Adig"/>
</dbReference>
<dbReference type="VEuPathDB" id="HostDB:ENSMUSG00000044405"/>
<dbReference type="eggNOG" id="ENOG502SXJP">
    <property type="taxonomic scope" value="Eukaryota"/>
</dbReference>
<dbReference type="GeneTree" id="ENSGT00390000018723"/>
<dbReference type="HOGENOM" id="CLU_2605436_0_0_1"/>
<dbReference type="InParanoid" id="Q8R400"/>
<dbReference type="OMA" id="QGPAEFC"/>
<dbReference type="OrthoDB" id="9426851at2759"/>
<dbReference type="PhylomeDB" id="Q8R400"/>
<dbReference type="BioGRID-ORCS" id="246747">
    <property type="hits" value="3 hits in 77 CRISPR screens"/>
</dbReference>
<dbReference type="ChiTaRS" id="C1qtnf7">
    <property type="organism name" value="mouse"/>
</dbReference>
<dbReference type="PRO" id="PR:Q8R400"/>
<dbReference type="Proteomes" id="UP000000589">
    <property type="component" value="Chromosome 2"/>
</dbReference>
<dbReference type="RNAct" id="Q8R400">
    <property type="molecule type" value="protein"/>
</dbReference>
<dbReference type="Bgee" id="ENSMUSG00000044405">
    <property type="expression patterns" value="Expressed in brown adipose tissue and 99 other cell types or tissues"/>
</dbReference>
<dbReference type="ExpressionAtlas" id="Q8R400">
    <property type="expression patterns" value="baseline and differential"/>
</dbReference>
<dbReference type="GO" id="GO:0005737">
    <property type="term" value="C:cytoplasm"/>
    <property type="evidence" value="ECO:0000314"/>
    <property type="project" value="HGNC-UCL"/>
</dbReference>
<dbReference type="GO" id="GO:0005811">
    <property type="term" value="C:lipid droplet"/>
    <property type="evidence" value="ECO:0000314"/>
    <property type="project" value="MGI"/>
</dbReference>
<dbReference type="GO" id="GO:0016020">
    <property type="term" value="C:membrane"/>
    <property type="evidence" value="ECO:0007669"/>
    <property type="project" value="UniProtKB-SubCell"/>
</dbReference>
<dbReference type="GO" id="GO:0005634">
    <property type="term" value="C:nucleus"/>
    <property type="evidence" value="ECO:0000314"/>
    <property type="project" value="HGNC-UCL"/>
</dbReference>
<dbReference type="GO" id="GO:0050873">
    <property type="term" value="P:brown fat cell differentiation"/>
    <property type="evidence" value="ECO:0000270"/>
    <property type="project" value="HGNC-UCL"/>
</dbReference>
<dbReference type="GO" id="GO:0045600">
    <property type="term" value="P:positive regulation of fat cell differentiation"/>
    <property type="evidence" value="ECO:0000315"/>
    <property type="project" value="HGNC-UCL"/>
</dbReference>
<dbReference type="GO" id="GO:0007283">
    <property type="term" value="P:spermatogenesis"/>
    <property type="evidence" value="ECO:0000270"/>
    <property type="project" value="BHF-UCL"/>
</dbReference>
<dbReference type="GO" id="GO:0050872">
    <property type="term" value="P:white fat cell differentiation"/>
    <property type="evidence" value="ECO:0000270"/>
    <property type="project" value="HGNC-UCL"/>
</dbReference>
<dbReference type="InterPro" id="IPR027938">
    <property type="entry name" value="Adipogenin"/>
</dbReference>
<dbReference type="PANTHER" id="PTHR38499">
    <property type="entry name" value="ADIPOGENIN"/>
    <property type="match status" value="1"/>
</dbReference>
<dbReference type="PANTHER" id="PTHR38499:SF1">
    <property type="entry name" value="ADIPOGENIN"/>
    <property type="match status" value="1"/>
</dbReference>
<dbReference type="Pfam" id="PF15202">
    <property type="entry name" value="Adipogenin"/>
    <property type="match status" value="1"/>
</dbReference>